<protein>
    <recommendedName>
        <fullName evidence="1">Isoleucine--tRNA ligase</fullName>
        <ecNumber evidence="1">6.1.1.5</ecNumber>
    </recommendedName>
    <alternativeName>
        <fullName evidence="1">Isoleucyl-tRNA synthetase</fullName>
        <shortName evidence="1">IleRS</shortName>
    </alternativeName>
</protein>
<gene>
    <name evidence="1" type="primary">ileS</name>
    <name type="ordered locus">Rmet_2885</name>
</gene>
<name>SYI_CUPMC</name>
<comment type="function">
    <text evidence="1">Catalyzes the attachment of isoleucine to tRNA(Ile). As IleRS can inadvertently accommodate and process structurally similar amino acids such as valine, to avoid such errors it has two additional distinct tRNA(Ile)-dependent editing activities. One activity is designated as 'pretransfer' editing and involves the hydrolysis of activated Val-AMP. The other activity is designated 'posttransfer' editing and involves deacylation of mischarged Val-tRNA(Ile).</text>
</comment>
<comment type="catalytic activity">
    <reaction evidence="1">
        <text>tRNA(Ile) + L-isoleucine + ATP = L-isoleucyl-tRNA(Ile) + AMP + diphosphate</text>
        <dbReference type="Rhea" id="RHEA:11060"/>
        <dbReference type="Rhea" id="RHEA-COMP:9666"/>
        <dbReference type="Rhea" id="RHEA-COMP:9695"/>
        <dbReference type="ChEBI" id="CHEBI:30616"/>
        <dbReference type="ChEBI" id="CHEBI:33019"/>
        <dbReference type="ChEBI" id="CHEBI:58045"/>
        <dbReference type="ChEBI" id="CHEBI:78442"/>
        <dbReference type="ChEBI" id="CHEBI:78528"/>
        <dbReference type="ChEBI" id="CHEBI:456215"/>
        <dbReference type="EC" id="6.1.1.5"/>
    </reaction>
</comment>
<comment type="cofactor">
    <cofactor evidence="1">
        <name>Zn(2+)</name>
        <dbReference type="ChEBI" id="CHEBI:29105"/>
    </cofactor>
    <text evidence="1">Binds 1 zinc ion per subunit.</text>
</comment>
<comment type="subunit">
    <text evidence="1">Monomer.</text>
</comment>
<comment type="subcellular location">
    <subcellularLocation>
        <location evidence="1">Cytoplasm</location>
    </subcellularLocation>
</comment>
<comment type="domain">
    <text evidence="1">IleRS has two distinct active sites: one for aminoacylation and one for editing. The misactivated valine is translocated from the active site to the editing site, which sterically excludes the correctly activated isoleucine. The single editing site contains two valyl binding pockets, one specific for each substrate (Val-AMP or Val-tRNA(Ile)).</text>
</comment>
<comment type="similarity">
    <text evidence="1">Belongs to the class-I aminoacyl-tRNA synthetase family. IleS type 1 subfamily.</text>
</comment>
<feature type="chain" id="PRO_1000022112" description="Isoleucine--tRNA ligase">
    <location>
        <begin position="1"/>
        <end position="959"/>
    </location>
</feature>
<feature type="short sequence motif" description="'HIGH' region">
    <location>
        <begin position="66"/>
        <end position="76"/>
    </location>
</feature>
<feature type="short sequence motif" description="'KMSKS' region">
    <location>
        <begin position="633"/>
        <end position="637"/>
    </location>
</feature>
<feature type="binding site" evidence="1">
    <location>
        <position position="592"/>
    </location>
    <ligand>
        <name>L-isoleucyl-5'-AMP</name>
        <dbReference type="ChEBI" id="CHEBI:178002"/>
    </ligand>
</feature>
<feature type="binding site" evidence="1">
    <location>
        <position position="636"/>
    </location>
    <ligand>
        <name>ATP</name>
        <dbReference type="ChEBI" id="CHEBI:30616"/>
    </ligand>
</feature>
<feature type="binding site" evidence="1">
    <location>
        <position position="922"/>
    </location>
    <ligand>
        <name>Zn(2+)</name>
        <dbReference type="ChEBI" id="CHEBI:29105"/>
    </ligand>
</feature>
<feature type="binding site" evidence="1">
    <location>
        <position position="925"/>
    </location>
    <ligand>
        <name>Zn(2+)</name>
        <dbReference type="ChEBI" id="CHEBI:29105"/>
    </ligand>
</feature>
<feature type="binding site" evidence="1">
    <location>
        <position position="942"/>
    </location>
    <ligand>
        <name>Zn(2+)</name>
        <dbReference type="ChEBI" id="CHEBI:29105"/>
    </ligand>
</feature>
<feature type="binding site" evidence="1">
    <location>
        <position position="945"/>
    </location>
    <ligand>
        <name>Zn(2+)</name>
        <dbReference type="ChEBI" id="CHEBI:29105"/>
    </ligand>
</feature>
<sequence length="959" mass="107836">MSDDKRAKPEKSKYPVNLLDTPFPMRGDLPKREPQWVKQWQDKQLYKKIRAARHGAKKFVLHDGPPYANGDIHIGHAVNKVLKDMIIKARGLTGLDAVYVPGWDCHGMPIEIQIEKQFGKGLPVQEVQSKARAYATEQIARQRKDFERLGVLGDWENPYLTMNFSNEADELRALGKIMERGYVFRGLKPVNWCFDCGSALAEAEVEYKDKVDLSIDVGFPFAETDKIAHAFHVPLAQLEGKPGWIVIWTTTPWTIPSNQALNMHPEVEYALVDTPRGFLILAKDRVEEQLKTYALEGTIVATARGDALTEVRFHHPLAKMDAGYVRTSPVYLGDYVTTDTGTGIVHSAPAYGVEDFQSCKAHGMPDSDIISPVMGDGVYASTLPLFGGLSIWDANPKIVEVLRESGNLFNSHKYEHSYMHCWRHKTPIIYRATSQWFAGMDVDPVDNGPTLRETALAGIEATEFYPAWGKQRLHNMIANRPDWTLSRQRQWGVPMAFFVHKETGALHPRTPELLEEVAKLVEKHGIEAWQTLDPKDLLGDEAAQYEKNRDTLDVWFDSGTTHWTVIRGSHRDELYDPAADLPDGRLADLYLEGSDQHRGWFHSSLLTASMLYGKPPYKALLTHGFTVDGEGRKMSKSVGNTVSPQDISNKMGAEIIRLWVASTDYSGELSISDEILKRVVEGYRRIRNTLRFLLANLTDYDHAKHALPASEWLEIDRYAVALTDRLQKEVLSHYQAYEFHPVVAKLQTFCSEDLGGFYLDVLKDRLYTTAADSKARRGAQNALYHITQAMLHWMAPFLTFTAEEAWQIFAHGTEHKDTIFTSTYYAIPSVDDGDTLLQKWHEIRTVRAEVTRQLEAVRVEGDIGSSLQAEVTIAAGGPVLAALQSLEDDLRFVLLTSAAKVTPAPEGGDLLVTVTPSQHAKCERCWHYRADVGHNPEHPTICGRCDSNLFGAGEHRSHA</sequence>
<accession>Q1LJB8</accession>
<dbReference type="EC" id="6.1.1.5" evidence="1"/>
<dbReference type="EMBL" id="CP000352">
    <property type="protein sequence ID" value="ABF09758.1"/>
    <property type="molecule type" value="Genomic_DNA"/>
</dbReference>
<dbReference type="RefSeq" id="WP_011517438.1">
    <property type="nucleotide sequence ID" value="NC_007973.1"/>
</dbReference>
<dbReference type="SMR" id="Q1LJB8"/>
<dbReference type="STRING" id="266264.Rmet_2885"/>
<dbReference type="KEGG" id="rme:Rmet_2885"/>
<dbReference type="eggNOG" id="COG0060">
    <property type="taxonomic scope" value="Bacteria"/>
</dbReference>
<dbReference type="HOGENOM" id="CLU_001493_7_1_4"/>
<dbReference type="Proteomes" id="UP000002429">
    <property type="component" value="Chromosome"/>
</dbReference>
<dbReference type="GO" id="GO:0005829">
    <property type="term" value="C:cytosol"/>
    <property type="evidence" value="ECO:0007669"/>
    <property type="project" value="TreeGrafter"/>
</dbReference>
<dbReference type="GO" id="GO:0002161">
    <property type="term" value="F:aminoacyl-tRNA deacylase activity"/>
    <property type="evidence" value="ECO:0007669"/>
    <property type="project" value="InterPro"/>
</dbReference>
<dbReference type="GO" id="GO:0005524">
    <property type="term" value="F:ATP binding"/>
    <property type="evidence" value="ECO:0007669"/>
    <property type="project" value="UniProtKB-UniRule"/>
</dbReference>
<dbReference type="GO" id="GO:0004822">
    <property type="term" value="F:isoleucine-tRNA ligase activity"/>
    <property type="evidence" value="ECO:0007669"/>
    <property type="project" value="UniProtKB-UniRule"/>
</dbReference>
<dbReference type="GO" id="GO:0000049">
    <property type="term" value="F:tRNA binding"/>
    <property type="evidence" value="ECO:0007669"/>
    <property type="project" value="InterPro"/>
</dbReference>
<dbReference type="GO" id="GO:0008270">
    <property type="term" value="F:zinc ion binding"/>
    <property type="evidence" value="ECO:0007669"/>
    <property type="project" value="UniProtKB-UniRule"/>
</dbReference>
<dbReference type="GO" id="GO:0006428">
    <property type="term" value="P:isoleucyl-tRNA aminoacylation"/>
    <property type="evidence" value="ECO:0007669"/>
    <property type="project" value="UniProtKB-UniRule"/>
</dbReference>
<dbReference type="CDD" id="cd07960">
    <property type="entry name" value="Anticodon_Ia_Ile_BEm"/>
    <property type="match status" value="1"/>
</dbReference>
<dbReference type="CDD" id="cd00818">
    <property type="entry name" value="IleRS_core"/>
    <property type="match status" value="1"/>
</dbReference>
<dbReference type="FunFam" id="3.40.50.620:FF:000042">
    <property type="entry name" value="Isoleucine--tRNA ligase"/>
    <property type="match status" value="1"/>
</dbReference>
<dbReference type="FunFam" id="3.40.50.620:FF:000048">
    <property type="entry name" value="Isoleucine--tRNA ligase"/>
    <property type="match status" value="1"/>
</dbReference>
<dbReference type="Gene3D" id="1.10.730.20">
    <property type="match status" value="1"/>
</dbReference>
<dbReference type="Gene3D" id="3.40.50.620">
    <property type="entry name" value="HUPs"/>
    <property type="match status" value="2"/>
</dbReference>
<dbReference type="Gene3D" id="3.90.740.10">
    <property type="entry name" value="Valyl/Leucyl/Isoleucyl-tRNA synthetase, editing domain"/>
    <property type="match status" value="1"/>
</dbReference>
<dbReference type="HAMAP" id="MF_02002">
    <property type="entry name" value="Ile_tRNA_synth_type1"/>
    <property type="match status" value="1"/>
</dbReference>
<dbReference type="InterPro" id="IPR001412">
    <property type="entry name" value="aa-tRNA-synth_I_CS"/>
</dbReference>
<dbReference type="InterPro" id="IPR002300">
    <property type="entry name" value="aa-tRNA-synth_Ia"/>
</dbReference>
<dbReference type="InterPro" id="IPR033708">
    <property type="entry name" value="Anticodon_Ile_BEm"/>
</dbReference>
<dbReference type="InterPro" id="IPR002301">
    <property type="entry name" value="Ile-tRNA-ligase"/>
</dbReference>
<dbReference type="InterPro" id="IPR023585">
    <property type="entry name" value="Ile-tRNA-ligase_type1"/>
</dbReference>
<dbReference type="InterPro" id="IPR050081">
    <property type="entry name" value="Ile-tRNA_ligase"/>
</dbReference>
<dbReference type="InterPro" id="IPR013155">
    <property type="entry name" value="M/V/L/I-tRNA-synth_anticd-bd"/>
</dbReference>
<dbReference type="InterPro" id="IPR014729">
    <property type="entry name" value="Rossmann-like_a/b/a_fold"/>
</dbReference>
<dbReference type="InterPro" id="IPR009080">
    <property type="entry name" value="tRNAsynth_Ia_anticodon-bd"/>
</dbReference>
<dbReference type="InterPro" id="IPR009008">
    <property type="entry name" value="Val/Leu/Ile-tRNA-synth_edit"/>
</dbReference>
<dbReference type="InterPro" id="IPR010663">
    <property type="entry name" value="Znf_FPG/IleRS"/>
</dbReference>
<dbReference type="NCBIfam" id="TIGR00392">
    <property type="entry name" value="ileS"/>
    <property type="match status" value="1"/>
</dbReference>
<dbReference type="PANTHER" id="PTHR42765:SF1">
    <property type="entry name" value="ISOLEUCINE--TRNA LIGASE, MITOCHONDRIAL"/>
    <property type="match status" value="1"/>
</dbReference>
<dbReference type="PANTHER" id="PTHR42765">
    <property type="entry name" value="SOLEUCYL-TRNA SYNTHETASE"/>
    <property type="match status" value="1"/>
</dbReference>
<dbReference type="Pfam" id="PF08264">
    <property type="entry name" value="Anticodon_1"/>
    <property type="match status" value="1"/>
</dbReference>
<dbReference type="Pfam" id="PF00133">
    <property type="entry name" value="tRNA-synt_1"/>
    <property type="match status" value="1"/>
</dbReference>
<dbReference type="Pfam" id="PF06827">
    <property type="entry name" value="zf-FPG_IleRS"/>
    <property type="match status" value="1"/>
</dbReference>
<dbReference type="PRINTS" id="PR00984">
    <property type="entry name" value="TRNASYNTHILE"/>
</dbReference>
<dbReference type="SUPFAM" id="SSF47323">
    <property type="entry name" value="Anticodon-binding domain of a subclass of class I aminoacyl-tRNA synthetases"/>
    <property type="match status" value="1"/>
</dbReference>
<dbReference type="SUPFAM" id="SSF52374">
    <property type="entry name" value="Nucleotidylyl transferase"/>
    <property type="match status" value="1"/>
</dbReference>
<dbReference type="SUPFAM" id="SSF50677">
    <property type="entry name" value="ValRS/IleRS/LeuRS editing domain"/>
    <property type="match status" value="1"/>
</dbReference>
<dbReference type="PROSITE" id="PS00178">
    <property type="entry name" value="AA_TRNA_LIGASE_I"/>
    <property type="match status" value="1"/>
</dbReference>
<keyword id="KW-0030">Aminoacyl-tRNA synthetase</keyword>
<keyword id="KW-0067">ATP-binding</keyword>
<keyword id="KW-0963">Cytoplasm</keyword>
<keyword id="KW-0436">Ligase</keyword>
<keyword id="KW-0479">Metal-binding</keyword>
<keyword id="KW-0547">Nucleotide-binding</keyword>
<keyword id="KW-0648">Protein biosynthesis</keyword>
<keyword id="KW-1185">Reference proteome</keyword>
<keyword id="KW-0862">Zinc</keyword>
<reference key="1">
    <citation type="journal article" date="2010" name="PLoS ONE">
        <title>The complete genome sequence of Cupriavidus metallidurans strain CH34, a master survivalist in harsh and anthropogenic environments.</title>
        <authorList>
            <person name="Janssen P.J."/>
            <person name="Van Houdt R."/>
            <person name="Moors H."/>
            <person name="Monsieurs P."/>
            <person name="Morin N."/>
            <person name="Michaux A."/>
            <person name="Benotmane M.A."/>
            <person name="Leys N."/>
            <person name="Vallaeys T."/>
            <person name="Lapidus A."/>
            <person name="Monchy S."/>
            <person name="Medigue C."/>
            <person name="Taghavi S."/>
            <person name="McCorkle S."/>
            <person name="Dunn J."/>
            <person name="van der Lelie D."/>
            <person name="Mergeay M."/>
        </authorList>
    </citation>
    <scope>NUCLEOTIDE SEQUENCE [LARGE SCALE GENOMIC DNA]</scope>
    <source>
        <strain>ATCC 43123 / DSM 2839 / NBRC 102507 / CH34</strain>
    </source>
</reference>
<proteinExistence type="inferred from homology"/>
<evidence type="ECO:0000255" key="1">
    <source>
        <dbReference type="HAMAP-Rule" id="MF_02002"/>
    </source>
</evidence>
<organism>
    <name type="scientific">Cupriavidus metallidurans (strain ATCC 43123 / DSM 2839 / NBRC 102507 / CH34)</name>
    <name type="common">Ralstonia metallidurans</name>
    <dbReference type="NCBI Taxonomy" id="266264"/>
    <lineage>
        <taxon>Bacteria</taxon>
        <taxon>Pseudomonadati</taxon>
        <taxon>Pseudomonadota</taxon>
        <taxon>Betaproteobacteria</taxon>
        <taxon>Burkholderiales</taxon>
        <taxon>Burkholderiaceae</taxon>
        <taxon>Cupriavidus</taxon>
    </lineage>
</organism>